<sequence>MSQRGDRGEGHARRPGRSSSFGGGHRGGGGVGGAGKGGGGSSGQPPLATNRSFRKSGNGHGGHQRAVSQPDTHGFQPAPAPTALQTPPLRPPAPQNAPAHVPVPAPRPQHHDPSGARAPTLPPSSENTANAPPLKGIPHAAPRAPSRISSTSTSQGAPKGGAYNLQFGSFPMNGGTGGSTMQFPARTSSAPPNLDEQKRMQALPEGHKVVPSGLVPQAPKHQQQQQPLQQQKQQPQSQPPLQQTRKDVVSSNHSSKPINPHIPSQVKSSVHVSPSVPNVAPPRPPVQQIPGMPMSMPFHHQAPLQFGGHNPQIPPQGVVPSSLQMSMGLHGANAPQVAQQMYIPTIQHHHQLQPPTMMHQAAGIPYGPAAHQLTQMSGMMNVGVAPQFTPQQPNKYVTGPTRKTTVKITHPDTHEELKLDKRMDSSGQRGLPSVQQQSQPVSTYGSPMGFYQQNSYNQSTMFYPTTSGVGQVPTVSQGPRFVSTQTVSYISPSMNTGPGSNKDNLAGSTTSGHSQVTGKPHPAGLHMEKSGVQTVTISAPPGKSDVNKLKPAEDVVSHRQKDNEAVSGVRKSGENESKASPITEKHPTPVSQPLQALAANPETTAAASFVVNSVPGDDGKSKESIQRTGSFKDSNKNATKDTRNLSQEPQSASSAEDLKVHTSVKDVCCGVSLMESKGVNKESEQTNAASASPTEMLKAADASSIDRSSARSTSESTENVQEVGKSDVAIGDSEKSGITNKVSPDLTKDDISSGSTGNESHEVCTLDLAEQLPVGASNPDNLDTATSVTDQGQLLKEPSSSVSDENVIMDRSHQSAEKMSDLVDDTVASVASSETLPESIIQNANAKGNTSGNQETGSATSSNILNVLPVPHSVASEDPLKPESMLKDQSSSAPAASARPVSREKPSVEITRTKFTAVKKKKRREMLSKADAAGSSDLYNAYKGPEEKVDFIGASESLDSSSIADHELPDESSEKEVNMGEDEGKKKVELDDWEDAAEMSTPKLERSDSSNQTTEANGRKRYSRDFLLTLAQSCTNLPVGFQMIEYASVLFPNLAGKSYVVDHPSPGRGADRPASRGDRRGVVIEDDRWGKSGHLFGSGRDMSMDNGPPTMNHRGAPGVMRNPRGGLINVGPVAPQMSRSGSDADRWQQKGIFPSPVTPMQVMHKAEKKYVVGKVSDEEEAKQRQLKAILNKLTPQNFEKLFEKVKEVNIDNVATLTGVISQIFDKALMEPTFCEMYANFCFHLAGALPDFSEDNEKITFKRLLLNKCQEEFERGEREEAEADKTEEEGEIKQTKEEREEKRIRARRRMLGNIRLIGELYKKRMLTERIMHECIKKLLGNYQNPDEENIEALCKLMSTIGEMIDHAKAKEHMDAYFDIMLKLSTSQQLSSRVRFMLRDSIDLRKNKWQQRRKVEGPKKIDEVHRDAAQERHAQSSRLARGSVVGSGPRRGAAPMDYGPRGSAAALASPSSQQVGHRGMPSHSRGFGTQDIRFEERSPLDHRTTVLPPRKDEAITLGPQGGLARGMSIRGQPLISNAELSSADSRRMVSGPNGYNSASTAREEPGSRIPDRSGRIAPNTQFAGPSNRPASQEGRSGNKLYSEDDLREKSISAIREYYSAKDEKEVALCIEELNAPSFYPSVVSLWVNDSFERKDMERELLTKLFVSLCNSRNNLLSKSHLTAGLATVLGSLEDALSDAPRAAEYLGRLLARFVVESILSLQEVGTLIEKGGEEPGELVHHGIGADVLGAVLESIKVEKGDSFLNEAKASSNLKLEDFRPQHLKRSKLDAFMKA</sequence>
<evidence type="ECO:0000250" key="1"/>
<evidence type="ECO:0000255" key="2">
    <source>
        <dbReference type="PROSITE-ProRule" id="PRU00698"/>
    </source>
</evidence>
<evidence type="ECO:0000256" key="3">
    <source>
        <dbReference type="SAM" id="MobiDB-lite"/>
    </source>
</evidence>
<evidence type="ECO:0000305" key="4"/>
<feature type="chain" id="PRO_0000420544" description="Eukaryotic translation initiation factor 4G">
    <location>
        <begin position="1"/>
        <end position="1792"/>
    </location>
</feature>
<feature type="domain" description="MIF4G" evidence="2">
    <location>
        <begin position="1183"/>
        <end position="1406"/>
    </location>
</feature>
<feature type="domain" description="MI" evidence="2">
    <location>
        <begin position="1603"/>
        <end position="1727"/>
    </location>
</feature>
<feature type="region of interest" description="Disordered" evidence="3">
    <location>
        <begin position="1"/>
        <end position="285"/>
    </location>
</feature>
<feature type="region of interest" description="Disordered" evidence="3">
    <location>
        <begin position="424"/>
        <end position="446"/>
    </location>
</feature>
<feature type="region of interest" description="Disordered" evidence="3">
    <location>
        <begin position="491"/>
        <end position="590"/>
    </location>
</feature>
<feature type="region of interest" description="Disordered" evidence="3">
    <location>
        <begin position="612"/>
        <end position="659"/>
    </location>
</feature>
<feature type="region of interest" description="Disordered" evidence="3">
    <location>
        <begin position="678"/>
        <end position="761"/>
    </location>
</feature>
<feature type="region of interest" description="Disordered" evidence="3">
    <location>
        <begin position="874"/>
        <end position="912"/>
    </location>
</feature>
<feature type="region of interest" description="Disordered" evidence="3">
    <location>
        <begin position="960"/>
        <end position="993"/>
    </location>
</feature>
<feature type="region of interest" description="Disordered" evidence="3">
    <location>
        <begin position="999"/>
        <end position="1018"/>
    </location>
</feature>
<feature type="region of interest" description="EIF4E-binding" evidence="1">
    <location>
        <begin position="1018"/>
        <end position="1030"/>
    </location>
</feature>
<feature type="region of interest" description="Disordered" evidence="3">
    <location>
        <begin position="1275"/>
        <end position="1299"/>
    </location>
</feature>
<feature type="region of interest" description="Disordered" evidence="3">
    <location>
        <begin position="1407"/>
        <end position="1503"/>
    </location>
</feature>
<feature type="region of interest" description="Disordered" evidence="3">
    <location>
        <begin position="1537"/>
        <end position="1600"/>
    </location>
</feature>
<feature type="compositionally biased region" description="Basic and acidic residues" evidence="3">
    <location>
        <begin position="1"/>
        <end position="12"/>
    </location>
</feature>
<feature type="compositionally biased region" description="Gly residues" evidence="3">
    <location>
        <begin position="21"/>
        <end position="42"/>
    </location>
</feature>
<feature type="compositionally biased region" description="Pro residues" evidence="3">
    <location>
        <begin position="88"/>
        <end position="107"/>
    </location>
</feature>
<feature type="compositionally biased region" description="Polar residues" evidence="3">
    <location>
        <begin position="147"/>
        <end position="156"/>
    </location>
</feature>
<feature type="compositionally biased region" description="Polar residues" evidence="3">
    <location>
        <begin position="179"/>
        <end position="191"/>
    </location>
</feature>
<feature type="compositionally biased region" description="Low complexity" evidence="3">
    <location>
        <begin position="216"/>
        <end position="243"/>
    </location>
</feature>
<feature type="compositionally biased region" description="Low complexity" evidence="3">
    <location>
        <begin position="263"/>
        <end position="278"/>
    </location>
</feature>
<feature type="compositionally biased region" description="Low complexity" evidence="3">
    <location>
        <begin position="432"/>
        <end position="442"/>
    </location>
</feature>
<feature type="compositionally biased region" description="Polar residues" evidence="3">
    <location>
        <begin position="491"/>
        <end position="517"/>
    </location>
</feature>
<feature type="compositionally biased region" description="Basic and acidic residues" evidence="3">
    <location>
        <begin position="545"/>
        <end position="564"/>
    </location>
</feature>
<feature type="compositionally biased region" description="Basic and acidic residues" evidence="3">
    <location>
        <begin position="571"/>
        <end position="587"/>
    </location>
</feature>
<feature type="compositionally biased region" description="Basic and acidic residues" evidence="3">
    <location>
        <begin position="633"/>
        <end position="643"/>
    </location>
</feature>
<feature type="compositionally biased region" description="Polar residues" evidence="3">
    <location>
        <begin position="644"/>
        <end position="654"/>
    </location>
</feature>
<feature type="compositionally biased region" description="Low complexity" evidence="3">
    <location>
        <begin position="699"/>
        <end position="718"/>
    </location>
</feature>
<feature type="compositionally biased region" description="Basic and acidic residues" evidence="3">
    <location>
        <begin position="964"/>
        <end position="990"/>
    </location>
</feature>
<feature type="compositionally biased region" description="Acidic residues" evidence="3">
    <location>
        <begin position="1278"/>
        <end position="1289"/>
    </location>
</feature>
<feature type="compositionally biased region" description="Basic and acidic residues" evidence="3">
    <location>
        <begin position="1290"/>
        <end position="1299"/>
    </location>
</feature>
<feature type="compositionally biased region" description="Basic and acidic residues" evidence="3">
    <location>
        <begin position="1411"/>
        <end position="1432"/>
    </location>
</feature>
<feature type="compositionally biased region" description="Low complexity" evidence="3">
    <location>
        <begin position="1439"/>
        <end position="1450"/>
    </location>
</feature>
<feature type="compositionally biased region" description="Low complexity" evidence="3">
    <location>
        <begin position="1461"/>
        <end position="1470"/>
    </location>
</feature>
<feature type="compositionally biased region" description="Basic and acidic residues" evidence="3">
    <location>
        <begin position="1490"/>
        <end position="1503"/>
    </location>
</feature>
<feature type="compositionally biased region" description="Basic and acidic residues" evidence="3">
    <location>
        <begin position="1559"/>
        <end position="1572"/>
    </location>
</feature>
<feature type="compositionally biased region" description="Polar residues" evidence="3">
    <location>
        <begin position="1576"/>
        <end position="1593"/>
    </location>
</feature>
<feature type="sequence conflict" description="In Ref. 5; AK068744." evidence="4" ref="5">
    <original>K</original>
    <variation>R</variation>
    <location>
        <position position="246"/>
    </location>
</feature>
<feature type="sequence conflict" description="In Ref. 5; AK069301." evidence="4" ref="5">
    <original>E</original>
    <variation>K</variation>
    <location>
        <position position="989"/>
    </location>
</feature>
<feature type="sequence conflict" description="In Ref. 5; AK066706." evidence="4" ref="5">
    <original>K</original>
    <variation>R</variation>
    <location>
        <position position="1336"/>
    </location>
</feature>
<gene>
    <name type="ordered locus">Os07g0555200</name>
    <name type="ordered locus">LOC_Os07g36940</name>
    <name type="ORF">OsJ_24703</name>
    <name type="ORF">OSJNBa0058I18.6</name>
</gene>
<reference key="1">
    <citation type="journal article" date="2005" name="Nature">
        <title>The map-based sequence of the rice genome.</title>
        <authorList>
            <consortium name="International rice genome sequencing project (IRGSP)"/>
        </authorList>
    </citation>
    <scope>NUCLEOTIDE SEQUENCE [LARGE SCALE GENOMIC DNA]</scope>
    <source>
        <strain>cv. Nipponbare</strain>
    </source>
</reference>
<reference key="2">
    <citation type="journal article" date="2008" name="Nucleic Acids Res.">
        <title>The rice annotation project database (RAP-DB): 2008 update.</title>
        <authorList>
            <consortium name="The rice annotation project (RAP)"/>
        </authorList>
    </citation>
    <scope>GENOME REANNOTATION</scope>
    <source>
        <strain>cv. Nipponbare</strain>
    </source>
</reference>
<reference key="3">
    <citation type="journal article" date="2013" name="Rice">
        <title>Improvement of the Oryza sativa Nipponbare reference genome using next generation sequence and optical map data.</title>
        <authorList>
            <person name="Kawahara Y."/>
            <person name="de la Bastide M."/>
            <person name="Hamilton J.P."/>
            <person name="Kanamori H."/>
            <person name="McCombie W.R."/>
            <person name="Ouyang S."/>
            <person name="Schwartz D.C."/>
            <person name="Tanaka T."/>
            <person name="Wu J."/>
            <person name="Zhou S."/>
            <person name="Childs K.L."/>
            <person name="Davidson R.M."/>
            <person name="Lin H."/>
            <person name="Quesada-Ocampo L."/>
            <person name="Vaillancourt B."/>
            <person name="Sakai H."/>
            <person name="Lee S.S."/>
            <person name="Kim J."/>
            <person name="Numa H."/>
            <person name="Itoh T."/>
            <person name="Buell C.R."/>
            <person name="Matsumoto T."/>
        </authorList>
    </citation>
    <scope>GENOME REANNOTATION</scope>
    <source>
        <strain>cv. Nipponbare</strain>
    </source>
</reference>
<reference key="4">
    <citation type="journal article" date="2005" name="PLoS Biol.">
        <title>The genomes of Oryza sativa: a history of duplications.</title>
        <authorList>
            <person name="Yu J."/>
            <person name="Wang J."/>
            <person name="Lin W."/>
            <person name="Li S."/>
            <person name="Li H."/>
            <person name="Zhou J."/>
            <person name="Ni P."/>
            <person name="Dong W."/>
            <person name="Hu S."/>
            <person name="Zeng C."/>
            <person name="Zhang J."/>
            <person name="Zhang Y."/>
            <person name="Li R."/>
            <person name="Xu Z."/>
            <person name="Li S."/>
            <person name="Li X."/>
            <person name="Zheng H."/>
            <person name="Cong L."/>
            <person name="Lin L."/>
            <person name="Yin J."/>
            <person name="Geng J."/>
            <person name="Li G."/>
            <person name="Shi J."/>
            <person name="Liu J."/>
            <person name="Lv H."/>
            <person name="Li J."/>
            <person name="Wang J."/>
            <person name="Deng Y."/>
            <person name="Ran L."/>
            <person name="Shi X."/>
            <person name="Wang X."/>
            <person name="Wu Q."/>
            <person name="Li C."/>
            <person name="Ren X."/>
            <person name="Wang J."/>
            <person name="Wang X."/>
            <person name="Li D."/>
            <person name="Liu D."/>
            <person name="Zhang X."/>
            <person name="Ji Z."/>
            <person name="Zhao W."/>
            <person name="Sun Y."/>
            <person name="Zhang Z."/>
            <person name="Bao J."/>
            <person name="Han Y."/>
            <person name="Dong L."/>
            <person name="Ji J."/>
            <person name="Chen P."/>
            <person name="Wu S."/>
            <person name="Liu J."/>
            <person name="Xiao Y."/>
            <person name="Bu D."/>
            <person name="Tan J."/>
            <person name="Yang L."/>
            <person name="Ye C."/>
            <person name="Zhang J."/>
            <person name="Xu J."/>
            <person name="Zhou Y."/>
            <person name="Yu Y."/>
            <person name="Zhang B."/>
            <person name="Zhuang S."/>
            <person name="Wei H."/>
            <person name="Liu B."/>
            <person name="Lei M."/>
            <person name="Yu H."/>
            <person name="Li Y."/>
            <person name="Xu H."/>
            <person name="Wei S."/>
            <person name="He X."/>
            <person name="Fang L."/>
            <person name="Zhang Z."/>
            <person name="Zhang Y."/>
            <person name="Huang X."/>
            <person name="Su Z."/>
            <person name="Tong W."/>
            <person name="Li J."/>
            <person name="Tong Z."/>
            <person name="Li S."/>
            <person name="Ye J."/>
            <person name="Wang L."/>
            <person name="Fang L."/>
            <person name="Lei T."/>
            <person name="Chen C.-S."/>
            <person name="Chen H.-C."/>
            <person name="Xu Z."/>
            <person name="Li H."/>
            <person name="Huang H."/>
            <person name="Zhang F."/>
            <person name="Xu H."/>
            <person name="Li N."/>
            <person name="Zhao C."/>
            <person name="Li S."/>
            <person name="Dong L."/>
            <person name="Huang Y."/>
            <person name="Li L."/>
            <person name="Xi Y."/>
            <person name="Qi Q."/>
            <person name="Li W."/>
            <person name="Zhang B."/>
            <person name="Hu W."/>
            <person name="Zhang Y."/>
            <person name="Tian X."/>
            <person name="Jiao Y."/>
            <person name="Liang X."/>
            <person name="Jin J."/>
            <person name="Gao L."/>
            <person name="Zheng W."/>
            <person name="Hao B."/>
            <person name="Liu S.-M."/>
            <person name="Wang W."/>
            <person name="Yuan L."/>
            <person name="Cao M."/>
            <person name="McDermott J."/>
            <person name="Samudrala R."/>
            <person name="Wang J."/>
            <person name="Wong G.K.-S."/>
            <person name="Yang H."/>
        </authorList>
    </citation>
    <scope>NUCLEOTIDE SEQUENCE [LARGE SCALE GENOMIC DNA]</scope>
    <source>
        <strain>cv. Nipponbare</strain>
    </source>
</reference>
<reference key="5">
    <citation type="journal article" date="2003" name="Science">
        <title>Collection, mapping, and annotation of over 28,000 cDNA clones from japonica rice.</title>
        <authorList>
            <consortium name="The rice full-length cDNA consortium"/>
        </authorList>
    </citation>
    <scope>NUCLEOTIDE SEQUENCE [LARGE SCALE MRNA]</scope>
    <source>
        <strain>cv. Nipponbare</strain>
    </source>
</reference>
<reference key="6">
    <citation type="journal article" date="2007" name="Theor. Appl. Genet.">
        <title>Evaluation of genes from eIF4E and eIF4G multigenic families as potential candidates for partial resistance QTLs to Rice yellow mottle virus in rice.</title>
        <authorList>
            <person name="Boisnard A."/>
            <person name="Albar L."/>
            <person name="Thiemele D."/>
            <person name="Rondeau M."/>
            <person name="Ghesquiere A."/>
        </authorList>
    </citation>
    <scope>GENE FAMILY</scope>
</reference>
<comment type="function">
    <text>Component of the protein complex eIF4F, which is involved in the recognition of the mRNA cap, ATP-dependent unwinding of 5'-terminal secondary structure and recruitment of mRNA to the ribosome.</text>
</comment>
<comment type="subunit">
    <text>EIF4F is a multi-subunit complex, the composition of which varies with external and internal environmental conditions. It is composed of at least EIF4A, EIF4E and EIF4G. In higher plants two isoforms of EIF4F have been identified, named isoform EIF4F and isoform EIF(iso)4F. Isoform EIF4F has subunits p220 and p26, whereas isoform EIF(iso)4F has subunits p82 and p28.</text>
</comment>
<comment type="similarity">
    <text evidence="4">Belongs to the eukaryotic initiation factor 4G family.</text>
</comment>
<comment type="sequence caution" evidence="4">
    <conflict type="erroneous gene model prediction">
        <sequence resource="EMBL-CDS" id="BAD30897"/>
    </conflict>
</comment>
<comment type="sequence caution" evidence="4">
    <conflict type="erroneous gene model prediction">
        <sequence resource="EMBL-CDS" id="BAF21872"/>
    </conflict>
</comment>
<comment type="sequence caution" evidence="4">
    <conflict type="erroneous gene model prediction">
        <sequence resource="EMBL-CDS" id="EEE67392"/>
    </conflict>
</comment>
<proteinExistence type="evidence at transcript level"/>
<keyword id="KW-0396">Initiation factor</keyword>
<keyword id="KW-0648">Protein biosynthesis</keyword>
<keyword id="KW-1185">Reference proteome</keyword>
<keyword id="KW-0810">Translation regulation</keyword>
<organism>
    <name type="scientific">Oryza sativa subsp. japonica</name>
    <name type="common">Rice</name>
    <dbReference type="NCBI Taxonomy" id="39947"/>
    <lineage>
        <taxon>Eukaryota</taxon>
        <taxon>Viridiplantae</taxon>
        <taxon>Streptophyta</taxon>
        <taxon>Embryophyta</taxon>
        <taxon>Tracheophyta</taxon>
        <taxon>Spermatophyta</taxon>
        <taxon>Magnoliopsida</taxon>
        <taxon>Liliopsida</taxon>
        <taxon>Poales</taxon>
        <taxon>Poaceae</taxon>
        <taxon>BOP clade</taxon>
        <taxon>Oryzoideae</taxon>
        <taxon>Oryzeae</taxon>
        <taxon>Oryzinae</taxon>
        <taxon>Oryza</taxon>
        <taxon>Oryza sativa</taxon>
    </lineage>
</organism>
<dbReference type="EMBL" id="AP005125">
    <property type="protein sequence ID" value="BAD30897.1"/>
    <property type="status" value="ALT_SEQ"/>
    <property type="molecule type" value="Genomic_DNA"/>
</dbReference>
<dbReference type="EMBL" id="AP008213">
    <property type="protein sequence ID" value="BAF21872.1"/>
    <property type="status" value="ALT_SEQ"/>
    <property type="molecule type" value="Genomic_DNA"/>
</dbReference>
<dbReference type="EMBL" id="AP014963">
    <property type="status" value="NOT_ANNOTATED_CDS"/>
    <property type="molecule type" value="Genomic_DNA"/>
</dbReference>
<dbReference type="EMBL" id="CM000144">
    <property type="protein sequence ID" value="EEE67392.1"/>
    <property type="status" value="ALT_SEQ"/>
    <property type="molecule type" value="Genomic_DNA"/>
</dbReference>
<dbReference type="EMBL" id="AK066706">
    <property type="status" value="NOT_ANNOTATED_CDS"/>
    <property type="molecule type" value="mRNA"/>
</dbReference>
<dbReference type="EMBL" id="AK068744">
    <property type="status" value="NOT_ANNOTATED_CDS"/>
    <property type="molecule type" value="mRNA"/>
</dbReference>
<dbReference type="EMBL" id="AK069301">
    <property type="status" value="NOT_ANNOTATED_CDS"/>
    <property type="molecule type" value="mRNA"/>
</dbReference>
<dbReference type="EMBL" id="AK100968">
    <property type="status" value="NOT_ANNOTATED_CDS"/>
    <property type="molecule type" value="mRNA"/>
</dbReference>
<dbReference type="RefSeq" id="XP_015646496.1">
    <property type="nucleotide sequence ID" value="XM_015791010.1"/>
</dbReference>
<dbReference type="SMR" id="B9FXV5"/>
<dbReference type="FunCoup" id="B9FXV5">
    <property type="interactions" value="1061"/>
</dbReference>
<dbReference type="STRING" id="39947.B9FXV5"/>
<dbReference type="iPTMnet" id="B9FXV5"/>
<dbReference type="PaxDb" id="39947-B9FXV5"/>
<dbReference type="EnsemblPlants" id="Os07t0555200-01">
    <property type="protein sequence ID" value="Os07t0555200-01"/>
    <property type="gene ID" value="Os07g0555200"/>
</dbReference>
<dbReference type="Gramene" id="Os07t0555200-01">
    <property type="protein sequence ID" value="Os07t0555200-01"/>
    <property type="gene ID" value="Os07g0555200"/>
</dbReference>
<dbReference type="KEGG" id="dosa:Os07g0555200"/>
<dbReference type="eggNOG" id="KOG0401">
    <property type="taxonomic scope" value="Eukaryota"/>
</dbReference>
<dbReference type="HOGENOM" id="CLU_001191_0_0_1"/>
<dbReference type="InParanoid" id="B9FXV5"/>
<dbReference type="OrthoDB" id="514777at2759"/>
<dbReference type="Proteomes" id="UP000000763">
    <property type="component" value="Chromosome 7"/>
</dbReference>
<dbReference type="Proteomes" id="UP000007752">
    <property type="component" value="Chromosome 7"/>
</dbReference>
<dbReference type="Proteomes" id="UP000059680">
    <property type="component" value="Chromosome 7"/>
</dbReference>
<dbReference type="GO" id="GO:0016281">
    <property type="term" value="C:eukaryotic translation initiation factor 4F complex"/>
    <property type="evidence" value="ECO:0000318"/>
    <property type="project" value="GO_Central"/>
</dbReference>
<dbReference type="GO" id="GO:0003729">
    <property type="term" value="F:mRNA binding"/>
    <property type="evidence" value="ECO:0000318"/>
    <property type="project" value="GO_Central"/>
</dbReference>
<dbReference type="GO" id="GO:0003743">
    <property type="term" value="F:translation initiation factor activity"/>
    <property type="evidence" value="ECO:0000318"/>
    <property type="project" value="GO_Central"/>
</dbReference>
<dbReference type="GO" id="GO:0006417">
    <property type="term" value="P:regulation of translation"/>
    <property type="evidence" value="ECO:0007669"/>
    <property type="project" value="UniProtKB-KW"/>
</dbReference>
<dbReference type="GO" id="GO:0006413">
    <property type="term" value="P:translational initiation"/>
    <property type="evidence" value="ECO:0000318"/>
    <property type="project" value="GO_Central"/>
</dbReference>
<dbReference type="FunFam" id="1.25.40.180:FF:000024">
    <property type="entry name" value="Eukaryotic translation initiation factor 4G"/>
    <property type="match status" value="1"/>
</dbReference>
<dbReference type="FunFam" id="1.25.40.180:FF:000034">
    <property type="entry name" value="Eukaryotic translation initiation factor 4G"/>
    <property type="match status" value="1"/>
</dbReference>
<dbReference type="Gene3D" id="1.25.40.180">
    <property type="match status" value="2"/>
</dbReference>
<dbReference type="InterPro" id="IPR016024">
    <property type="entry name" value="ARM-type_fold"/>
</dbReference>
<dbReference type="InterPro" id="IPR003891">
    <property type="entry name" value="Initiation_fac_eIF4g_MI"/>
</dbReference>
<dbReference type="InterPro" id="IPR003890">
    <property type="entry name" value="MIF4G-like_typ-3"/>
</dbReference>
<dbReference type="PANTHER" id="PTHR23253">
    <property type="entry name" value="EUKARYOTIC TRANSLATION INITIATION FACTOR 4 GAMMA"/>
    <property type="match status" value="1"/>
</dbReference>
<dbReference type="PANTHER" id="PTHR23253:SF9">
    <property type="entry name" value="EUKARYOTIC TRANSLATION INITIATION FACTOR 4 GAMMA 2"/>
    <property type="match status" value="1"/>
</dbReference>
<dbReference type="Pfam" id="PF02847">
    <property type="entry name" value="MA3"/>
    <property type="match status" value="1"/>
</dbReference>
<dbReference type="Pfam" id="PF02854">
    <property type="entry name" value="MIF4G"/>
    <property type="match status" value="1"/>
</dbReference>
<dbReference type="SMART" id="SM00544">
    <property type="entry name" value="MA3"/>
    <property type="match status" value="1"/>
</dbReference>
<dbReference type="SMART" id="SM00543">
    <property type="entry name" value="MIF4G"/>
    <property type="match status" value="1"/>
</dbReference>
<dbReference type="SUPFAM" id="SSF48371">
    <property type="entry name" value="ARM repeat"/>
    <property type="match status" value="2"/>
</dbReference>
<dbReference type="PROSITE" id="PS51366">
    <property type="entry name" value="MI"/>
    <property type="match status" value="1"/>
</dbReference>
<name>IF4G_ORYSJ</name>
<accession>B9FXV5</accession>
<accession>Q0D5K1</accession>
<accession>Q69S49</accession>
<protein>
    <recommendedName>
        <fullName>Eukaryotic translation initiation factor 4G</fullName>
        <shortName>eIF-4G</shortName>
        <shortName>eIF4G</shortName>
    </recommendedName>
    <alternativeName>
        <fullName>Eukaryotic initiation factor 4F subunit p220</fullName>
        <shortName>eIF-4F p220 subunit</shortName>
    </alternativeName>
</protein>